<protein>
    <recommendedName>
        <fullName evidence="2">Elongation factor Tu</fullName>
        <shortName evidence="2">EF-Tu</shortName>
        <ecNumber evidence="2">3.6.5.3</ecNumber>
    </recommendedName>
</protein>
<comment type="function">
    <text evidence="2">GTP hydrolase that promotes the GTP-dependent binding of aminoacyl-tRNA to the A-site of ribosomes during protein biosynthesis.</text>
</comment>
<comment type="catalytic activity">
    <reaction evidence="2">
        <text>GTP + H2O = GDP + phosphate + H(+)</text>
        <dbReference type="Rhea" id="RHEA:19669"/>
        <dbReference type="ChEBI" id="CHEBI:15377"/>
        <dbReference type="ChEBI" id="CHEBI:15378"/>
        <dbReference type="ChEBI" id="CHEBI:37565"/>
        <dbReference type="ChEBI" id="CHEBI:43474"/>
        <dbReference type="ChEBI" id="CHEBI:58189"/>
        <dbReference type="EC" id="3.6.5.3"/>
    </reaction>
    <physiologicalReaction direction="left-to-right" evidence="2">
        <dbReference type="Rhea" id="RHEA:19670"/>
    </physiologicalReaction>
</comment>
<comment type="subunit">
    <text evidence="2">Monomer.</text>
</comment>
<comment type="subcellular location">
    <subcellularLocation>
        <location evidence="2">Cytoplasm</location>
    </subcellularLocation>
</comment>
<comment type="similarity">
    <text evidence="2">Belongs to the TRAFAC class translation factor GTPase superfamily. Classic translation factor GTPase family. EF-Tu/EF-1A subfamily.</text>
</comment>
<reference key="1">
    <citation type="journal article" date="2005" name="Nat. Biotechnol.">
        <title>Complete genome sequence of the acetic acid bacterium Gluconobacter oxydans.</title>
        <authorList>
            <person name="Prust C."/>
            <person name="Hoffmeister M."/>
            <person name="Liesegang H."/>
            <person name="Wiezer A."/>
            <person name="Fricke W.F."/>
            <person name="Ehrenreich A."/>
            <person name="Gottschalk G."/>
            <person name="Deppenmeier U."/>
        </authorList>
    </citation>
    <scope>NUCLEOTIDE SEQUENCE [LARGE SCALE GENOMIC DNA]</scope>
    <source>
        <strain>621H</strain>
    </source>
</reference>
<feature type="chain" id="PRO_1000015668" description="Elongation factor Tu">
    <location>
        <begin position="1"/>
        <end position="396"/>
    </location>
</feature>
<feature type="domain" description="tr-type G">
    <location>
        <begin position="10"/>
        <end position="206"/>
    </location>
</feature>
<feature type="region of interest" description="G1" evidence="1">
    <location>
        <begin position="19"/>
        <end position="26"/>
    </location>
</feature>
<feature type="region of interest" description="G2" evidence="1">
    <location>
        <begin position="60"/>
        <end position="64"/>
    </location>
</feature>
<feature type="region of interest" description="G3" evidence="1">
    <location>
        <begin position="81"/>
        <end position="84"/>
    </location>
</feature>
<feature type="region of interest" description="G4" evidence="1">
    <location>
        <begin position="136"/>
        <end position="139"/>
    </location>
</feature>
<feature type="region of interest" description="G5" evidence="1">
    <location>
        <begin position="174"/>
        <end position="176"/>
    </location>
</feature>
<feature type="binding site" evidence="2">
    <location>
        <begin position="19"/>
        <end position="26"/>
    </location>
    <ligand>
        <name>GTP</name>
        <dbReference type="ChEBI" id="CHEBI:37565"/>
    </ligand>
</feature>
<feature type="binding site" evidence="2">
    <location>
        <position position="26"/>
    </location>
    <ligand>
        <name>Mg(2+)</name>
        <dbReference type="ChEBI" id="CHEBI:18420"/>
    </ligand>
</feature>
<feature type="binding site" evidence="2">
    <location>
        <begin position="81"/>
        <end position="85"/>
    </location>
    <ligand>
        <name>GTP</name>
        <dbReference type="ChEBI" id="CHEBI:37565"/>
    </ligand>
</feature>
<feature type="binding site" evidence="2">
    <location>
        <begin position="136"/>
        <end position="139"/>
    </location>
    <ligand>
        <name>GTP</name>
        <dbReference type="ChEBI" id="CHEBI:37565"/>
    </ligand>
</feature>
<evidence type="ECO:0000250" key="1"/>
<evidence type="ECO:0000255" key="2">
    <source>
        <dbReference type="HAMAP-Rule" id="MF_00118"/>
    </source>
</evidence>
<dbReference type="EC" id="3.6.5.3" evidence="2"/>
<dbReference type="EMBL" id="CP000009">
    <property type="protein sequence ID" value="AAW60165.1"/>
    <property type="molecule type" value="Genomic_DNA"/>
</dbReference>
<dbReference type="RefSeq" id="WP_011251967.1">
    <property type="nucleotide sequence ID" value="NZ_LT900338.1"/>
</dbReference>
<dbReference type="SMR" id="Q5FTY1"/>
<dbReference type="STRING" id="290633.GOX0382"/>
<dbReference type="KEGG" id="gox:GOX0382"/>
<dbReference type="eggNOG" id="COG0050">
    <property type="taxonomic scope" value="Bacteria"/>
</dbReference>
<dbReference type="HOGENOM" id="CLU_007265_0_0_5"/>
<dbReference type="Proteomes" id="UP000006375">
    <property type="component" value="Chromosome"/>
</dbReference>
<dbReference type="GO" id="GO:0005829">
    <property type="term" value="C:cytosol"/>
    <property type="evidence" value="ECO:0007669"/>
    <property type="project" value="TreeGrafter"/>
</dbReference>
<dbReference type="GO" id="GO:0005525">
    <property type="term" value="F:GTP binding"/>
    <property type="evidence" value="ECO:0007669"/>
    <property type="project" value="UniProtKB-UniRule"/>
</dbReference>
<dbReference type="GO" id="GO:0003924">
    <property type="term" value="F:GTPase activity"/>
    <property type="evidence" value="ECO:0007669"/>
    <property type="project" value="InterPro"/>
</dbReference>
<dbReference type="GO" id="GO:0097216">
    <property type="term" value="F:guanosine tetraphosphate binding"/>
    <property type="evidence" value="ECO:0007669"/>
    <property type="project" value="UniProtKB-ARBA"/>
</dbReference>
<dbReference type="GO" id="GO:0003746">
    <property type="term" value="F:translation elongation factor activity"/>
    <property type="evidence" value="ECO:0007669"/>
    <property type="project" value="UniProtKB-UniRule"/>
</dbReference>
<dbReference type="CDD" id="cd01884">
    <property type="entry name" value="EF_Tu"/>
    <property type="match status" value="1"/>
</dbReference>
<dbReference type="CDD" id="cd03697">
    <property type="entry name" value="EFTU_II"/>
    <property type="match status" value="1"/>
</dbReference>
<dbReference type="CDD" id="cd03707">
    <property type="entry name" value="EFTU_III"/>
    <property type="match status" value="1"/>
</dbReference>
<dbReference type="FunFam" id="2.40.30.10:FF:000001">
    <property type="entry name" value="Elongation factor Tu"/>
    <property type="match status" value="1"/>
</dbReference>
<dbReference type="FunFam" id="3.40.50.300:FF:000003">
    <property type="entry name" value="Elongation factor Tu"/>
    <property type="match status" value="1"/>
</dbReference>
<dbReference type="Gene3D" id="3.40.50.300">
    <property type="entry name" value="P-loop containing nucleotide triphosphate hydrolases"/>
    <property type="match status" value="1"/>
</dbReference>
<dbReference type="Gene3D" id="2.40.30.10">
    <property type="entry name" value="Translation factors"/>
    <property type="match status" value="2"/>
</dbReference>
<dbReference type="HAMAP" id="MF_00118_B">
    <property type="entry name" value="EF_Tu_B"/>
    <property type="match status" value="1"/>
</dbReference>
<dbReference type="InterPro" id="IPR041709">
    <property type="entry name" value="EF-Tu_GTP-bd"/>
</dbReference>
<dbReference type="InterPro" id="IPR050055">
    <property type="entry name" value="EF-Tu_GTPase"/>
</dbReference>
<dbReference type="InterPro" id="IPR004161">
    <property type="entry name" value="EFTu-like_2"/>
</dbReference>
<dbReference type="InterPro" id="IPR033720">
    <property type="entry name" value="EFTU_2"/>
</dbReference>
<dbReference type="InterPro" id="IPR031157">
    <property type="entry name" value="G_TR_CS"/>
</dbReference>
<dbReference type="InterPro" id="IPR027417">
    <property type="entry name" value="P-loop_NTPase"/>
</dbReference>
<dbReference type="InterPro" id="IPR005225">
    <property type="entry name" value="Small_GTP-bd"/>
</dbReference>
<dbReference type="InterPro" id="IPR000795">
    <property type="entry name" value="T_Tr_GTP-bd_dom"/>
</dbReference>
<dbReference type="InterPro" id="IPR009000">
    <property type="entry name" value="Transl_B-barrel_sf"/>
</dbReference>
<dbReference type="InterPro" id="IPR009001">
    <property type="entry name" value="Transl_elong_EF1A/Init_IF2_C"/>
</dbReference>
<dbReference type="InterPro" id="IPR004541">
    <property type="entry name" value="Transl_elong_EFTu/EF1A_bac/org"/>
</dbReference>
<dbReference type="InterPro" id="IPR004160">
    <property type="entry name" value="Transl_elong_EFTu/EF1A_C"/>
</dbReference>
<dbReference type="NCBIfam" id="TIGR00485">
    <property type="entry name" value="EF-Tu"/>
    <property type="match status" value="1"/>
</dbReference>
<dbReference type="NCBIfam" id="NF000766">
    <property type="entry name" value="PRK00049.1"/>
    <property type="match status" value="1"/>
</dbReference>
<dbReference type="NCBIfam" id="NF009372">
    <property type="entry name" value="PRK12735.1"/>
    <property type="match status" value="1"/>
</dbReference>
<dbReference type="NCBIfam" id="NF009373">
    <property type="entry name" value="PRK12736.1"/>
    <property type="match status" value="1"/>
</dbReference>
<dbReference type="NCBIfam" id="TIGR00231">
    <property type="entry name" value="small_GTP"/>
    <property type="match status" value="1"/>
</dbReference>
<dbReference type="PANTHER" id="PTHR43721:SF22">
    <property type="entry name" value="ELONGATION FACTOR TU, MITOCHONDRIAL"/>
    <property type="match status" value="1"/>
</dbReference>
<dbReference type="PANTHER" id="PTHR43721">
    <property type="entry name" value="ELONGATION FACTOR TU-RELATED"/>
    <property type="match status" value="1"/>
</dbReference>
<dbReference type="Pfam" id="PF00009">
    <property type="entry name" value="GTP_EFTU"/>
    <property type="match status" value="1"/>
</dbReference>
<dbReference type="Pfam" id="PF03144">
    <property type="entry name" value="GTP_EFTU_D2"/>
    <property type="match status" value="1"/>
</dbReference>
<dbReference type="Pfam" id="PF03143">
    <property type="entry name" value="GTP_EFTU_D3"/>
    <property type="match status" value="1"/>
</dbReference>
<dbReference type="PRINTS" id="PR00315">
    <property type="entry name" value="ELONGATNFCT"/>
</dbReference>
<dbReference type="SUPFAM" id="SSF50465">
    <property type="entry name" value="EF-Tu/eEF-1alpha/eIF2-gamma C-terminal domain"/>
    <property type="match status" value="1"/>
</dbReference>
<dbReference type="SUPFAM" id="SSF52540">
    <property type="entry name" value="P-loop containing nucleoside triphosphate hydrolases"/>
    <property type="match status" value="1"/>
</dbReference>
<dbReference type="SUPFAM" id="SSF50447">
    <property type="entry name" value="Translation proteins"/>
    <property type="match status" value="1"/>
</dbReference>
<dbReference type="PROSITE" id="PS00301">
    <property type="entry name" value="G_TR_1"/>
    <property type="match status" value="1"/>
</dbReference>
<dbReference type="PROSITE" id="PS51722">
    <property type="entry name" value="G_TR_2"/>
    <property type="match status" value="1"/>
</dbReference>
<gene>
    <name evidence="2" type="primary">tuf</name>
    <name type="ordered locus">GOX0382</name>
</gene>
<sequence length="396" mass="42981">MAKAKFERTKPHCNIGTIGHVDHGKTSLTAAITKVLAKTGGATYSAYDQIDKAPEERARGITISTAHVEYETADRHYAHVDCPGHADYVKNMITGAAQMDGAILVVSAADGPMPQTREHILLARQVGVPALVVFLNKVDQVDDPELLELVEMEVRELLSSYQFPGDDIPIVKGSALVTLEDGDPSIGEDRVLELMTQVDAYIPQPERPVDRPFLMPIEDVFSISGRGTVVTGRVERGVVNVGDEVEIVGLKDTVKTTVTGVEMFRKLLDRGEAGDNIGALVRGTKREDVERGQVLAKPGSITPHKKFKAEAYILTKEEGGRHTPFFTNYRPQFYFRTTDVTGVVTLPEGTEMVMPGDNVAMDVELIAPIAMDEGLRFAIREGGRTVGAGVVSSITA</sequence>
<proteinExistence type="inferred from homology"/>
<name>EFTU_GLUOX</name>
<keyword id="KW-0963">Cytoplasm</keyword>
<keyword id="KW-0251">Elongation factor</keyword>
<keyword id="KW-0342">GTP-binding</keyword>
<keyword id="KW-0378">Hydrolase</keyword>
<keyword id="KW-0460">Magnesium</keyword>
<keyword id="KW-0479">Metal-binding</keyword>
<keyword id="KW-0547">Nucleotide-binding</keyword>
<keyword id="KW-0648">Protein biosynthesis</keyword>
<keyword id="KW-1185">Reference proteome</keyword>
<organism>
    <name type="scientific">Gluconobacter oxydans (strain 621H)</name>
    <name type="common">Gluconobacter suboxydans</name>
    <dbReference type="NCBI Taxonomy" id="290633"/>
    <lineage>
        <taxon>Bacteria</taxon>
        <taxon>Pseudomonadati</taxon>
        <taxon>Pseudomonadota</taxon>
        <taxon>Alphaproteobacteria</taxon>
        <taxon>Acetobacterales</taxon>
        <taxon>Acetobacteraceae</taxon>
        <taxon>Gluconobacter</taxon>
    </lineage>
</organism>
<accession>Q5FTY1</accession>